<evidence type="ECO:0000255" key="1">
    <source>
        <dbReference type="HAMAP-Rule" id="MF_01597"/>
    </source>
</evidence>
<name>MDTI_CITK8</name>
<keyword id="KW-0997">Cell inner membrane</keyword>
<keyword id="KW-1003">Cell membrane</keyword>
<keyword id="KW-0472">Membrane</keyword>
<keyword id="KW-1185">Reference proteome</keyword>
<keyword id="KW-0812">Transmembrane</keyword>
<keyword id="KW-1133">Transmembrane helix</keyword>
<keyword id="KW-0813">Transport</keyword>
<proteinExistence type="inferred from homology"/>
<accession>A8AGX4</accession>
<feature type="chain" id="PRO_0000331134" description="Spermidine export protein MdtI">
    <location>
        <begin position="1"/>
        <end position="109"/>
    </location>
</feature>
<feature type="transmembrane region" description="Helical" evidence="1">
    <location>
        <begin position="6"/>
        <end position="26"/>
    </location>
</feature>
<feature type="transmembrane region" description="Helical" evidence="1">
    <location>
        <begin position="36"/>
        <end position="56"/>
    </location>
</feature>
<feature type="transmembrane region" description="Helical" evidence="1">
    <location>
        <begin position="64"/>
        <end position="84"/>
    </location>
</feature>
<feature type="transmembrane region" description="Helical" evidence="1">
    <location>
        <begin position="88"/>
        <end position="108"/>
    </location>
</feature>
<protein>
    <recommendedName>
        <fullName evidence="1">Spermidine export protein MdtI</fullName>
    </recommendedName>
</protein>
<organism>
    <name type="scientific">Citrobacter koseri (strain ATCC BAA-895 / CDC 4225-83 / SGSC4696)</name>
    <dbReference type="NCBI Taxonomy" id="290338"/>
    <lineage>
        <taxon>Bacteria</taxon>
        <taxon>Pseudomonadati</taxon>
        <taxon>Pseudomonadota</taxon>
        <taxon>Gammaproteobacteria</taxon>
        <taxon>Enterobacterales</taxon>
        <taxon>Enterobacteriaceae</taxon>
        <taxon>Citrobacter</taxon>
    </lineage>
</organism>
<dbReference type="EMBL" id="CP000822">
    <property type="protein sequence ID" value="ABV12737.1"/>
    <property type="molecule type" value="Genomic_DNA"/>
</dbReference>
<dbReference type="RefSeq" id="WP_012132478.1">
    <property type="nucleotide sequence ID" value="NC_009792.1"/>
</dbReference>
<dbReference type="SMR" id="A8AGX4"/>
<dbReference type="STRING" id="290338.CKO_01605"/>
<dbReference type="GeneID" id="45135657"/>
<dbReference type="KEGG" id="cko:CKO_01605"/>
<dbReference type="HOGENOM" id="CLU_133067_0_4_6"/>
<dbReference type="OrthoDB" id="71834at2"/>
<dbReference type="Proteomes" id="UP000008148">
    <property type="component" value="Chromosome"/>
</dbReference>
<dbReference type="GO" id="GO:0005886">
    <property type="term" value="C:plasma membrane"/>
    <property type="evidence" value="ECO:0007669"/>
    <property type="project" value="UniProtKB-SubCell"/>
</dbReference>
<dbReference type="GO" id="GO:0015199">
    <property type="term" value="F:amino-acid betaine transmembrane transporter activity"/>
    <property type="evidence" value="ECO:0007669"/>
    <property type="project" value="TreeGrafter"/>
</dbReference>
<dbReference type="GO" id="GO:0015297">
    <property type="term" value="F:antiporter activity"/>
    <property type="evidence" value="ECO:0007669"/>
    <property type="project" value="TreeGrafter"/>
</dbReference>
<dbReference type="GO" id="GO:0015220">
    <property type="term" value="F:choline transmembrane transporter activity"/>
    <property type="evidence" value="ECO:0007669"/>
    <property type="project" value="TreeGrafter"/>
</dbReference>
<dbReference type="GO" id="GO:0015606">
    <property type="term" value="F:spermidine transmembrane transporter activity"/>
    <property type="evidence" value="ECO:0007669"/>
    <property type="project" value="UniProtKB-UniRule"/>
</dbReference>
<dbReference type="GO" id="GO:0031460">
    <property type="term" value="P:glycine betaine transport"/>
    <property type="evidence" value="ECO:0007669"/>
    <property type="project" value="TreeGrafter"/>
</dbReference>
<dbReference type="FunFam" id="1.10.3730.20:FF:000001">
    <property type="entry name" value="Quaternary ammonium compound resistance transporter SugE"/>
    <property type="match status" value="1"/>
</dbReference>
<dbReference type="Gene3D" id="1.10.3730.20">
    <property type="match status" value="1"/>
</dbReference>
<dbReference type="HAMAP" id="MF_01597">
    <property type="entry name" value="MdtI"/>
    <property type="match status" value="1"/>
</dbReference>
<dbReference type="InterPro" id="IPR000390">
    <property type="entry name" value="Small_drug/metabolite_transptr"/>
</dbReference>
<dbReference type="InterPro" id="IPR045324">
    <property type="entry name" value="Small_multidrug_res"/>
</dbReference>
<dbReference type="InterPro" id="IPR023737">
    <property type="entry name" value="Spermidine_export_MdtI"/>
</dbReference>
<dbReference type="NCBIfam" id="NF007934">
    <property type="entry name" value="PRK10650.1"/>
    <property type="match status" value="1"/>
</dbReference>
<dbReference type="PANTHER" id="PTHR30561">
    <property type="entry name" value="SMR FAMILY PROTON-DEPENDENT DRUG EFFLUX TRANSPORTER SUGE"/>
    <property type="match status" value="1"/>
</dbReference>
<dbReference type="PANTHER" id="PTHR30561:SF6">
    <property type="entry name" value="SPERMIDINE EXPORT PROTEIN MDTI"/>
    <property type="match status" value="1"/>
</dbReference>
<dbReference type="Pfam" id="PF00893">
    <property type="entry name" value="Multi_Drug_Res"/>
    <property type="match status" value="1"/>
</dbReference>
<dbReference type="SUPFAM" id="SSF103481">
    <property type="entry name" value="Multidrug resistance efflux transporter EmrE"/>
    <property type="match status" value="1"/>
</dbReference>
<gene>
    <name evidence="1" type="primary">mdtI</name>
    <name type="ordered locus">CKO_01605</name>
</gene>
<comment type="function">
    <text evidence="1">Catalyzes the excretion of spermidine.</text>
</comment>
<comment type="subunit">
    <text evidence="1">Forms a complex with MdtJ.</text>
</comment>
<comment type="subcellular location">
    <subcellularLocation>
        <location evidence="1">Cell inner membrane</location>
        <topology evidence="1">Multi-pass membrane protein</topology>
    </subcellularLocation>
</comment>
<comment type="similarity">
    <text evidence="1">Belongs to the drug/metabolite transporter (DMT) superfamily. Small multidrug resistance (SMR) (TC 2.A.7.1) family. MdtI subfamily.</text>
</comment>
<reference key="1">
    <citation type="submission" date="2007-08" db="EMBL/GenBank/DDBJ databases">
        <authorList>
            <consortium name="The Citrobacter koseri Genome Sequencing Project"/>
            <person name="McClelland M."/>
            <person name="Sanderson E.K."/>
            <person name="Porwollik S."/>
            <person name="Spieth J."/>
            <person name="Clifton W.S."/>
            <person name="Latreille P."/>
            <person name="Courtney L."/>
            <person name="Wang C."/>
            <person name="Pepin K."/>
            <person name="Bhonagiri V."/>
            <person name="Nash W."/>
            <person name="Johnson M."/>
            <person name="Thiruvilangam P."/>
            <person name="Wilson R."/>
        </authorList>
    </citation>
    <scope>NUCLEOTIDE SEQUENCE [LARGE SCALE GENOMIC DNA]</scope>
    <source>
        <strain>ATCC BAA-895 / CDC 4225-83 / SGSC4696</strain>
    </source>
</reference>
<sequence>MPQFEWVHAAWLAMAIVLEIVANVFLKFSDGFRRKFYGILSLAAVLAAFSALSQAVKGIDLSVAYALWGGFGIAATLAAGWVLFGQRLNNKGWVGVVLLLIGMIMIKLA</sequence>